<reference key="1">
    <citation type="journal article" date="2005" name="Science">
        <title>The transcriptional landscape of the mammalian genome.</title>
        <authorList>
            <person name="Carninci P."/>
            <person name="Kasukawa T."/>
            <person name="Katayama S."/>
            <person name="Gough J."/>
            <person name="Frith M.C."/>
            <person name="Maeda N."/>
            <person name="Oyama R."/>
            <person name="Ravasi T."/>
            <person name="Lenhard B."/>
            <person name="Wells C."/>
            <person name="Kodzius R."/>
            <person name="Shimokawa K."/>
            <person name="Bajic V.B."/>
            <person name="Brenner S.E."/>
            <person name="Batalov S."/>
            <person name="Forrest A.R."/>
            <person name="Zavolan M."/>
            <person name="Davis M.J."/>
            <person name="Wilming L.G."/>
            <person name="Aidinis V."/>
            <person name="Allen J.E."/>
            <person name="Ambesi-Impiombato A."/>
            <person name="Apweiler R."/>
            <person name="Aturaliya R.N."/>
            <person name="Bailey T.L."/>
            <person name="Bansal M."/>
            <person name="Baxter L."/>
            <person name="Beisel K.W."/>
            <person name="Bersano T."/>
            <person name="Bono H."/>
            <person name="Chalk A.M."/>
            <person name="Chiu K.P."/>
            <person name="Choudhary V."/>
            <person name="Christoffels A."/>
            <person name="Clutterbuck D.R."/>
            <person name="Crowe M.L."/>
            <person name="Dalla E."/>
            <person name="Dalrymple B.P."/>
            <person name="de Bono B."/>
            <person name="Della Gatta G."/>
            <person name="di Bernardo D."/>
            <person name="Down T."/>
            <person name="Engstrom P."/>
            <person name="Fagiolini M."/>
            <person name="Faulkner G."/>
            <person name="Fletcher C.F."/>
            <person name="Fukushima T."/>
            <person name="Furuno M."/>
            <person name="Futaki S."/>
            <person name="Gariboldi M."/>
            <person name="Georgii-Hemming P."/>
            <person name="Gingeras T.R."/>
            <person name="Gojobori T."/>
            <person name="Green R.E."/>
            <person name="Gustincich S."/>
            <person name="Harbers M."/>
            <person name="Hayashi Y."/>
            <person name="Hensch T.K."/>
            <person name="Hirokawa N."/>
            <person name="Hill D."/>
            <person name="Huminiecki L."/>
            <person name="Iacono M."/>
            <person name="Ikeo K."/>
            <person name="Iwama A."/>
            <person name="Ishikawa T."/>
            <person name="Jakt M."/>
            <person name="Kanapin A."/>
            <person name="Katoh M."/>
            <person name="Kawasawa Y."/>
            <person name="Kelso J."/>
            <person name="Kitamura H."/>
            <person name="Kitano H."/>
            <person name="Kollias G."/>
            <person name="Krishnan S.P."/>
            <person name="Kruger A."/>
            <person name="Kummerfeld S.K."/>
            <person name="Kurochkin I.V."/>
            <person name="Lareau L.F."/>
            <person name="Lazarevic D."/>
            <person name="Lipovich L."/>
            <person name="Liu J."/>
            <person name="Liuni S."/>
            <person name="McWilliam S."/>
            <person name="Madan Babu M."/>
            <person name="Madera M."/>
            <person name="Marchionni L."/>
            <person name="Matsuda H."/>
            <person name="Matsuzawa S."/>
            <person name="Miki H."/>
            <person name="Mignone F."/>
            <person name="Miyake S."/>
            <person name="Morris K."/>
            <person name="Mottagui-Tabar S."/>
            <person name="Mulder N."/>
            <person name="Nakano N."/>
            <person name="Nakauchi H."/>
            <person name="Ng P."/>
            <person name="Nilsson R."/>
            <person name="Nishiguchi S."/>
            <person name="Nishikawa S."/>
            <person name="Nori F."/>
            <person name="Ohara O."/>
            <person name="Okazaki Y."/>
            <person name="Orlando V."/>
            <person name="Pang K.C."/>
            <person name="Pavan W.J."/>
            <person name="Pavesi G."/>
            <person name="Pesole G."/>
            <person name="Petrovsky N."/>
            <person name="Piazza S."/>
            <person name="Reed J."/>
            <person name="Reid J.F."/>
            <person name="Ring B.Z."/>
            <person name="Ringwald M."/>
            <person name="Rost B."/>
            <person name="Ruan Y."/>
            <person name="Salzberg S.L."/>
            <person name="Sandelin A."/>
            <person name="Schneider C."/>
            <person name="Schoenbach C."/>
            <person name="Sekiguchi K."/>
            <person name="Semple C.A."/>
            <person name="Seno S."/>
            <person name="Sessa L."/>
            <person name="Sheng Y."/>
            <person name="Shibata Y."/>
            <person name="Shimada H."/>
            <person name="Shimada K."/>
            <person name="Silva D."/>
            <person name="Sinclair B."/>
            <person name="Sperling S."/>
            <person name="Stupka E."/>
            <person name="Sugiura K."/>
            <person name="Sultana R."/>
            <person name="Takenaka Y."/>
            <person name="Taki K."/>
            <person name="Tammoja K."/>
            <person name="Tan S.L."/>
            <person name="Tang S."/>
            <person name="Taylor M.S."/>
            <person name="Tegner J."/>
            <person name="Teichmann S.A."/>
            <person name="Ueda H.R."/>
            <person name="van Nimwegen E."/>
            <person name="Verardo R."/>
            <person name="Wei C.L."/>
            <person name="Yagi K."/>
            <person name="Yamanishi H."/>
            <person name="Zabarovsky E."/>
            <person name="Zhu S."/>
            <person name="Zimmer A."/>
            <person name="Hide W."/>
            <person name="Bult C."/>
            <person name="Grimmond S.M."/>
            <person name="Teasdale R.D."/>
            <person name="Liu E.T."/>
            <person name="Brusic V."/>
            <person name="Quackenbush J."/>
            <person name="Wahlestedt C."/>
            <person name="Mattick J.S."/>
            <person name="Hume D.A."/>
            <person name="Kai C."/>
            <person name="Sasaki D."/>
            <person name="Tomaru Y."/>
            <person name="Fukuda S."/>
            <person name="Kanamori-Katayama M."/>
            <person name="Suzuki M."/>
            <person name="Aoki J."/>
            <person name="Arakawa T."/>
            <person name="Iida J."/>
            <person name="Imamura K."/>
            <person name="Itoh M."/>
            <person name="Kato T."/>
            <person name="Kawaji H."/>
            <person name="Kawagashira N."/>
            <person name="Kawashima T."/>
            <person name="Kojima M."/>
            <person name="Kondo S."/>
            <person name="Konno H."/>
            <person name="Nakano K."/>
            <person name="Ninomiya N."/>
            <person name="Nishio T."/>
            <person name="Okada M."/>
            <person name="Plessy C."/>
            <person name="Shibata K."/>
            <person name="Shiraki T."/>
            <person name="Suzuki S."/>
            <person name="Tagami M."/>
            <person name="Waki K."/>
            <person name="Watahiki A."/>
            <person name="Okamura-Oho Y."/>
            <person name="Suzuki H."/>
            <person name="Kawai J."/>
            <person name="Hayashizaki Y."/>
        </authorList>
    </citation>
    <scope>NUCLEOTIDE SEQUENCE [LARGE SCALE MRNA] (ISOFORMS 1; 2; 3 AND 4)</scope>
    <source>
        <strain>C57BL/6J</strain>
        <strain>NOD</strain>
        <tissue>Dendritic cell</tissue>
        <tissue>Embryo</tissue>
        <tissue>Embryonic stem cell</tissue>
    </source>
</reference>
<reference key="2">
    <citation type="journal article" date="2004" name="Genome Res.">
        <title>The status, quality, and expansion of the NIH full-length cDNA project: the Mammalian Gene Collection (MGC).</title>
        <authorList>
            <consortium name="The MGC Project Team"/>
        </authorList>
    </citation>
    <scope>NUCLEOTIDE SEQUENCE [LARGE SCALE MRNA] (ISOFORM 2)</scope>
    <source>
        <strain>FVB/N</strain>
        <tissue>Mammary gland</tissue>
    </source>
</reference>
<reference key="3">
    <citation type="journal article" date="2007" name="Nat. Genet.">
        <title>Mutations in LMF1 cause combined lipase deficiency and severe hypertriglyceridemia.</title>
        <authorList>
            <person name="Peterfy M."/>
            <person name="Ben-Zeev O."/>
            <person name="Mao H.Z."/>
            <person name="Weissglas-Volkov D."/>
            <person name="Aouizerat B.E."/>
            <person name="Pullinger C.R."/>
            <person name="Frost P.H."/>
            <person name="Kane J.P."/>
            <person name="Malloy M.J."/>
            <person name="Reue K."/>
            <person name="Pajukanta P."/>
            <person name="Doolittle M.H."/>
        </authorList>
    </citation>
    <scope>INVOLVEMENT IN CLD</scope>
    <scope>FUNCTION</scope>
    <scope>SUBCELLULAR LOCATION</scope>
    <scope>TISSUE SPECIFICITY</scope>
</reference>
<reference key="4">
    <citation type="journal article" date="2009" name="J. Biol. Chem.">
        <title>Lipase maturation factor LMF1, membrane topology and interaction with lipase proteins in the endoplasmic reticulum.</title>
        <authorList>
            <person name="Doolittle M.H."/>
            <person name="Neher S.B."/>
            <person name="Ben-Zeev O."/>
            <person name="Ling-Liao J."/>
            <person name="Gallagher C.M."/>
            <person name="Hosseini M."/>
            <person name="Yin F."/>
            <person name="Wong H."/>
            <person name="Walter P."/>
            <person name="Peterfy M."/>
        </authorList>
    </citation>
    <scope>RETRACTED PAPER</scope>
</reference>
<reference key="5">
    <citation type="journal article" date="2019" name="J. Biol. Chem.">
        <authorList>
            <person name="Doolittle M.H."/>
            <person name="Neher S.B."/>
            <person name="Ben-Zeev O."/>
            <person name="Ling-Liao J."/>
            <person name="Gallagher C.M."/>
            <person name="Hosseini M."/>
            <person name="Yin F."/>
            <person name="Wong H."/>
            <person name="Walter P."/>
            <person name="Peterfy M."/>
        </authorList>
    </citation>
    <scope>RETRACTION NOTICE OF PUBMED:19783858</scope>
</reference>
<reference key="6">
    <citation type="journal article" date="2010" name="Cell">
        <title>A tissue-specific atlas of mouse protein phosphorylation and expression.</title>
        <authorList>
            <person name="Huttlin E.L."/>
            <person name="Jedrychowski M.P."/>
            <person name="Elias J.E."/>
            <person name="Goswami T."/>
            <person name="Rad R."/>
            <person name="Beausoleil S.A."/>
            <person name="Villen J."/>
            <person name="Haas W."/>
            <person name="Sowa M.E."/>
            <person name="Gygi S.P."/>
        </authorList>
    </citation>
    <scope>IDENTIFICATION BY MASS SPECTROMETRY [LARGE SCALE ANALYSIS]</scope>
    <source>
        <tissue>Brown adipose tissue</tissue>
        <tissue>Kidney</tissue>
        <tissue>Liver</tissue>
        <tissue>Lung</tissue>
        <tissue>Pancreas</tissue>
        <tissue>Spleen</tissue>
        <tissue>Testis</tissue>
    </source>
</reference>
<reference key="7">
    <citation type="journal article" date="2014" name="Cell Metab.">
        <title>The ER-associated degradation adaptor protein Sel1L regulates LPL secretion and lipid metabolism.</title>
        <authorList>
            <person name="Sha H."/>
            <person name="Sun S."/>
            <person name="Francisco A.B."/>
            <person name="Ehrhardt N."/>
            <person name="Xue Z."/>
            <person name="Liu L."/>
            <person name="Lawrence P."/>
            <person name="Mattijssen F."/>
            <person name="Guber R.D."/>
            <person name="Panhwar M.S."/>
            <person name="Brenna J.T."/>
            <person name="Shi H."/>
            <person name="Xue B."/>
            <person name="Kersten S."/>
            <person name="Bensadoun A."/>
            <person name="Peterfy M."/>
            <person name="Long Q."/>
            <person name="Qi L."/>
        </authorList>
    </citation>
    <scope>INTERACTION WITH LPL AND SEL1L</scope>
</reference>
<organism>
    <name type="scientific">Mus musculus</name>
    <name type="common">Mouse</name>
    <dbReference type="NCBI Taxonomy" id="10090"/>
    <lineage>
        <taxon>Eukaryota</taxon>
        <taxon>Metazoa</taxon>
        <taxon>Chordata</taxon>
        <taxon>Craniata</taxon>
        <taxon>Vertebrata</taxon>
        <taxon>Euteleostomi</taxon>
        <taxon>Mammalia</taxon>
        <taxon>Eutheria</taxon>
        <taxon>Euarchontoglires</taxon>
        <taxon>Glires</taxon>
        <taxon>Rodentia</taxon>
        <taxon>Myomorpha</taxon>
        <taxon>Muroidea</taxon>
        <taxon>Muridae</taxon>
        <taxon>Murinae</taxon>
        <taxon>Mus</taxon>
        <taxon>Mus</taxon>
    </lineage>
</organism>
<comment type="function">
    <text evidence="1 4">Involved in the maturation of specific proteins in the endoplasmic reticulum. Required for maturation and transport of active lipoprotein lipase (LPL) through the secretory pathway. Each LMF1 molecule chaperones 50 or more molecules of LPL.</text>
</comment>
<comment type="subunit">
    <text evidence="5">Interacts with LPL and SEL1L.</text>
</comment>
<comment type="subcellular location">
    <subcellularLocation>
        <location evidence="4">Endoplasmic reticulum membrane</location>
        <topology evidence="4">Multi-pass membrane protein</topology>
    </subcellularLocation>
</comment>
<comment type="alternative products">
    <event type="alternative splicing"/>
    <isoform>
        <id>Q3U3R4-1</id>
        <name>1</name>
        <sequence type="displayed"/>
    </isoform>
    <isoform>
        <id>Q3U3R4-2</id>
        <name>2</name>
        <sequence type="described" ref="VSP_022974"/>
    </isoform>
    <isoform>
        <id>Q3U3R4-3</id>
        <name>3</name>
        <sequence type="described" ref="VSP_022973"/>
    </isoform>
    <isoform>
        <id>Q3U3R4-4</id>
        <name>4</name>
        <sequence type="described" ref="VSP_022975 VSP_022976"/>
    </isoform>
</comment>
<comment type="tissue specificity">
    <text evidence="4">Expressed in all tissues synthesizing lipoprotein lipase (Lpl) and hepatic lipase (Lipc), including adipose tissue, skeletal muscle, heart, and liver. Expressed at higher levels in tissues that express little or no lipase activity such as testis and pancreas suggesting additional functions in these tissues.</text>
</comment>
<comment type="disease">
    <text>Defects in Lmf1 are the cause of combined lipase deficiency (cld). Cld is characterized by severe hypertriglyceridemia with accumulation of chylomicrons that gradually pack the lumina of capillaries and sinusoids. Severe hypertriglyceridemia causes an increase in blood viscosity, ischemia, and cyanosis, and the inability of tissues to access circulating triglycerides results in starvation, poor thermoregulation, and death 2 to 3 days after birth. The disorder is caused by a decrease in the activity of lipoprotein lipase (Lpl) and the related hepatic lipase (Lipc), caused by impaired maturation of nascent Lpl and hepatic lipase polypeptides in the endoplasmic reticulum.</text>
</comment>
<comment type="similarity">
    <text evidence="8">Belongs to the lipase maturation factor family.</text>
</comment>
<comment type="caution">
    <text evidence="9 10">Additional evidence for its localization to the endoplasmic reticulum membrane was found. However this paper was retracted due to manipulation of data.</text>
</comment>
<proteinExistence type="evidence at protein level"/>
<accession>Q3U3R4</accession>
<accession>Q3TDV1</accession>
<accession>Q8BM33</accession>
<accession>Q8BY75</accession>
<accession>Q8VDX3</accession>
<accession>Q9CWX8</accession>
<gene>
    <name type="primary">Lmf1</name>
    <name type="synonym">Tmem112</name>
</gene>
<sequence>MRPDSLVMAAPEGSLRKRKVGGAEHSPASQPSLARDPADSPARLHTGTFWLTRIVLLRALAFIYFVAFLVAFNQNKALIGDRGLLPCKLYLKNVQEYFQGSTGWAAWTYAPTIMWLLDWSDMNFNLDLIALLGLGISSFVLVTGCANMILMTALWALYMSLVNVGQIWYSFGWESQLLETGFLGIFLSPLWTLSRLPKNTPTSQIVLWGFRWLIFRIMLGAGLIKVRGDKCWLDLTCMDFHYETQPVPNPIAYYLHRSPWWFHRFETLSNHFVELLVPFFLFLGRRMRILHGVLQILFQVILIISGNLSFLNWLTIVPSLACFDDAALGFLFPSGPQGLKKQVLEIQREDTQRVQPKPRDRGCLVRQVVNISLGILVAWLSVPVVINLLSSRQIMNTSFNPLRIVNTYGAFGSVTKERTEVILQGTVSPNASAPDAVWEDYEFKCKPGDPWRQPCLISPYHYRLDWLMWFAAFQTYEQNEWILHLAGKLLAGDSEALALLAVNPFEGRTPPRWIRGEHYRYKFSLPGGQHATQGKWWIRKRIGPYFPPLRLEDLKEYFKTREWPLPEPPSRHTR</sequence>
<protein>
    <recommendedName>
        <fullName>Lipase maturation factor 1</fullName>
    </recommendedName>
    <alternativeName>
        <fullName>Transmembrane protein 112</fullName>
    </alternativeName>
</protein>
<evidence type="ECO:0000250" key="1">
    <source>
        <dbReference type="UniProtKB" id="Q96S06"/>
    </source>
</evidence>
<evidence type="ECO:0000255" key="2"/>
<evidence type="ECO:0000256" key="3">
    <source>
        <dbReference type="SAM" id="MobiDB-lite"/>
    </source>
</evidence>
<evidence type="ECO:0000269" key="4">
    <source>
    </source>
</evidence>
<evidence type="ECO:0000269" key="5">
    <source>
    </source>
</evidence>
<evidence type="ECO:0000303" key="6">
    <source>
    </source>
</evidence>
<evidence type="ECO:0000303" key="7">
    <source>
    </source>
</evidence>
<evidence type="ECO:0000305" key="8"/>
<evidence type="ECO:0000305" key="9">
    <source>
    </source>
</evidence>
<evidence type="ECO:0000305" key="10">
    <source>
    </source>
</evidence>
<keyword id="KW-0025">Alternative splicing</keyword>
<keyword id="KW-0143">Chaperone</keyword>
<keyword id="KW-0256">Endoplasmic reticulum</keyword>
<keyword id="KW-0472">Membrane</keyword>
<keyword id="KW-1185">Reference proteome</keyword>
<keyword id="KW-0812">Transmembrane</keyword>
<keyword id="KW-1133">Transmembrane helix</keyword>
<feature type="chain" id="PRO_0000276740" description="Lipase maturation factor 1">
    <location>
        <begin position="1"/>
        <end position="574"/>
    </location>
</feature>
<feature type="topological domain" description="Cytoplasmic" evidence="2">
    <location>
        <begin position="1"/>
        <end position="49"/>
    </location>
</feature>
<feature type="transmembrane region" description="Helical" evidence="2">
    <location>
        <begin position="50"/>
        <end position="72"/>
    </location>
</feature>
<feature type="topological domain" description="Lumenal" evidence="2">
    <location>
        <begin position="73"/>
        <end position="127"/>
    </location>
</feature>
<feature type="transmembrane region" description="Helical" evidence="2">
    <location>
        <begin position="128"/>
        <end position="151"/>
    </location>
</feature>
<feature type="topological domain" description="Cytoplasmic" evidence="2">
    <location>
        <begin position="152"/>
        <end position="207"/>
    </location>
</feature>
<feature type="transmembrane region" description="Helical" evidence="2">
    <location>
        <begin position="208"/>
        <end position="221"/>
    </location>
</feature>
<feature type="topological domain" description="Lumenal" evidence="2">
    <location>
        <begin position="222"/>
        <end position="292"/>
    </location>
</feature>
<feature type="transmembrane region" description="Helical" evidence="2">
    <location>
        <begin position="293"/>
        <end position="321"/>
    </location>
</feature>
<feature type="topological domain" description="Cytoplasmic" evidence="2">
    <location>
        <begin position="322"/>
        <end position="367"/>
    </location>
</feature>
<feature type="transmembrane region" description="Helical" evidence="2">
    <location>
        <begin position="368"/>
        <end position="388"/>
    </location>
</feature>
<feature type="topological domain" description="Lumenal" evidence="2">
    <location>
        <begin position="389"/>
        <end position="574"/>
    </location>
</feature>
<feature type="region of interest" description="Disordered" evidence="3">
    <location>
        <begin position="1"/>
        <end position="39"/>
    </location>
</feature>
<feature type="splice variant" id="VSP_022973" description="In isoform 3." evidence="7">
    <location>
        <begin position="1"/>
        <end position="217"/>
    </location>
</feature>
<feature type="splice variant" id="VSP_022974" description="In isoform 2." evidence="6 7">
    <location>
        <begin position="1"/>
        <end position="7"/>
    </location>
</feature>
<feature type="splice variant" id="VSP_022975" description="In isoform 4." evidence="7">
    <original>WESQLLETGFLGIFLS</original>
    <variation>AQGAITSYPQSRTERE</variation>
    <location>
        <begin position="173"/>
        <end position="188"/>
    </location>
</feature>
<feature type="splice variant" id="VSP_022976" description="In isoform 4." evidence="7">
    <location>
        <begin position="189"/>
        <end position="574"/>
    </location>
</feature>
<feature type="sequence conflict" description="In Ref. 2; AAH20104." evidence="8" ref="2">
    <original>L</original>
    <variation>Q</variation>
    <location>
        <position position="551"/>
    </location>
</feature>
<dbReference type="EMBL" id="AK010312">
    <property type="protein sequence ID" value="BAB26844.1"/>
    <property type="molecule type" value="mRNA"/>
</dbReference>
<dbReference type="EMBL" id="AK035119">
    <property type="protein sequence ID" value="BAC28952.1"/>
    <property type="molecule type" value="mRNA"/>
</dbReference>
<dbReference type="EMBL" id="AK041659">
    <property type="protein sequence ID" value="BAC31022.1"/>
    <property type="molecule type" value="mRNA"/>
</dbReference>
<dbReference type="EMBL" id="AK154622">
    <property type="protein sequence ID" value="BAE32721.1"/>
    <property type="molecule type" value="mRNA"/>
</dbReference>
<dbReference type="EMBL" id="AK169983">
    <property type="protein sequence ID" value="BAE41497.1"/>
    <property type="molecule type" value="mRNA"/>
</dbReference>
<dbReference type="EMBL" id="BC020104">
    <property type="protein sequence ID" value="AAH20104.1"/>
    <property type="molecule type" value="mRNA"/>
</dbReference>
<dbReference type="CCDS" id="CCDS37502.2">
    <molecule id="Q3U3R4-1"/>
</dbReference>
<dbReference type="RefSeq" id="NP_083900.3">
    <molecule id="Q3U3R4-1"/>
    <property type="nucleotide sequence ID" value="NM_029624.4"/>
</dbReference>
<dbReference type="RefSeq" id="XP_006525159.1">
    <property type="nucleotide sequence ID" value="XM_006525096.3"/>
</dbReference>
<dbReference type="RefSeq" id="XP_030105997.1">
    <molecule id="Q3U3R4-3"/>
    <property type="nucleotide sequence ID" value="XM_030250137.2"/>
</dbReference>
<dbReference type="BioGRID" id="218147">
    <property type="interactions" value="3"/>
</dbReference>
<dbReference type="FunCoup" id="Q3U3R4">
    <property type="interactions" value="222"/>
</dbReference>
<dbReference type="STRING" id="10090.ENSMUSP00000112340"/>
<dbReference type="GlyGen" id="Q3U3R4">
    <property type="glycosylation" value="1 site, 1 O-linked glycan (1 site)"/>
</dbReference>
<dbReference type="iPTMnet" id="Q3U3R4"/>
<dbReference type="PhosphoSitePlus" id="Q3U3R4"/>
<dbReference type="SwissPalm" id="Q3U3R4"/>
<dbReference type="jPOST" id="Q3U3R4"/>
<dbReference type="PaxDb" id="10090-ENSMUSP00000112340"/>
<dbReference type="PeptideAtlas" id="Q3U3R4"/>
<dbReference type="ProteomicsDB" id="252478">
    <molecule id="Q3U3R4-1"/>
</dbReference>
<dbReference type="ProteomicsDB" id="252479">
    <molecule id="Q3U3R4-2"/>
</dbReference>
<dbReference type="ProteomicsDB" id="252480">
    <molecule id="Q3U3R4-3"/>
</dbReference>
<dbReference type="ProteomicsDB" id="252481">
    <molecule id="Q3U3R4-4"/>
</dbReference>
<dbReference type="Pumba" id="Q3U3R4"/>
<dbReference type="Antibodypedia" id="5146">
    <property type="antibodies" value="43 antibodies from 16 providers"/>
</dbReference>
<dbReference type="DNASU" id="76483"/>
<dbReference type="Ensembl" id="ENSMUST00000116641.9">
    <molecule id="Q3U3R4-1"/>
    <property type="protein sequence ID" value="ENSMUSP00000112340.3"/>
    <property type="gene ID" value="ENSMUSG00000002279.20"/>
</dbReference>
<dbReference type="GeneID" id="76483"/>
<dbReference type="KEGG" id="mmu:76483"/>
<dbReference type="UCSC" id="uc008bbf.3">
    <molecule id="Q3U3R4-1"/>
    <property type="organism name" value="mouse"/>
</dbReference>
<dbReference type="AGR" id="MGI:1923733"/>
<dbReference type="CTD" id="64788"/>
<dbReference type="MGI" id="MGI:1923733">
    <property type="gene designation" value="Lmf1"/>
</dbReference>
<dbReference type="VEuPathDB" id="HostDB:ENSMUSG00000002279"/>
<dbReference type="eggNOG" id="ENOG502QT4H">
    <property type="taxonomic scope" value="Eukaryota"/>
</dbReference>
<dbReference type="GeneTree" id="ENSGT00530000063702"/>
<dbReference type="HOGENOM" id="CLU_020557_2_0_1"/>
<dbReference type="InParanoid" id="Q3U3R4"/>
<dbReference type="OrthoDB" id="23766at9989"/>
<dbReference type="PhylomeDB" id="Q3U3R4"/>
<dbReference type="TreeFam" id="TF314339"/>
<dbReference type="Reactome" id="R-MMU-8963889">
    <property type="pathway name" value="Assembly of active LPL and LIPC lipase complexes"/>
</dbReference>
<dbReference type="BioGRID-ORCS" id="76483">
    <property type="hits" value="1 hit in 77 CRISPR screens"/>
</dbReference>
<dbReference type="ChiTaRS" id="Lmf1">
    <property type="organism name" value="mouse"/>
</dbReference>
<dbReference type="PRO" id="PR:Q3U3R4"/>
<dbReference type="Proteomes" id="UP000000589">
    <property type="component" value="Chromosome 17"/>
</dbReference>
<dbReference type="RNAct" id="Q3U3R4">
    <property type="molecule type" value="protein"/>
</dbReference>
<dbReference type="Bgee" id="ENSMUSG00000002279">
    <property type="expression patterns" value="Expressed in spermatocyte and 219 other cell types or tissues"/>
</dbReference>
<dbReference type="ExpressionAtlas" id="Q3U3R4">
    <property type="expression patterns" value="baseline and differential"/>
</dbReference>
<dbReference type="GO" id="GO:0005789">
    <property type="term" value="C:endoplasmic reticulum membrane"/>
    <property type="evidence" value="ECO:0000314"/>
    <property type="project" value="MGI"/>
</dbReference>
<dbReference type="GO" id="GO:0034382">
    <property type="term" value="P:chylomicron remnant clearance"/>
    <property type="evidence" value="ECO:0000315"/>
    <property type="project" value="MGI"/>
</dbReference>
<dbReference type="GO" id="GO:0006888">
    <property type="term" value="P:endoplasmic reticulum to Golgi vesicle-mediated transport"/>
    <property type="evidence" value="ECO:0000315"/>
    <property type="project" value="MGI"/>
</dbReference>
<dbReference type="GO" id="GO:0006486">
    <property type="term" value="P:protein glycosylation"/>
    <property type="evidence" value="ECO:0000315"/>
    <property type="project" value="MGI"/>
</dbReference>
<dbReference type="GO" id="GO:0051604">
    <property type="term" value="P:protein maturation"/>
    <property type="evidence" value="ECO:0000314"/>
    <property type="project" value="MGI"/>
</dbReference>
<dbReference type="GO" id="GO:0009306">
    <property type="term" value="P:protein secretion"/>
    <property type="evidence" value="ECO:0000315"/>
    <property type="project" value="MGI"/>
</dbReference>
<dbReference type="GO" id="GO:0090181">
    <property type="term" value="P:regulation of cholesterol metabolic process"/>
    <property type="evidence" value="ECO:0000315"/>
    <property type="project" value="MGI"/>
</dbReference>
<dbReference type="GO" id="GO:0090207">
    <property type="term" value="P:regulation of triglyceride metabolic process"/>
    <property type="evidence" value="ECO:0000315"/>
    <property type="project" value="MGI"/>
</dbReference>
<dbReference type="GO" id="GO:0006641">
    <property type="term" value="P:triglyceride metabolic process"/>
    <property type="evidence" value="ECO:0000250"/>
    <property type="project" value="UniProtKB"/>
</dbReference>
<dbReference type="InterPro" id="IPR009613">
    <property type="entry name" value="LMF"/>
</dbReference>
<dbReference type="PANTHER" id="PTHR14463">
    <property type="entry name" value="LIPASE MATURATION FACTOR"/>
    <property type="match status" value="1"/>
</dbReference>
<dbReference type="PANTHER" id="PTHR14463:SF10">
    <property type="entry name" value="LIPASE MATURATION FACTOR 1"/>
    <property type="match status" value="1"/>
</dbReference>
<dbReference type="Pfam" id="PF06762">
    <property type="entry name" value="LMF1"/>
    <property type="match status" value="1"/>
</dbReference>
<dbReference type="Pfam" id="PF25179">
    <property type="entry name" value="LMF1_C"/>
    <property type="match status" value="1"/>
</dbReference>
<name>LMF1_MOUSE</name>